<comment type="function">
    <text evidence="1">The beta subunit is responsible for the synthesis of L-tryptophan from indole and L-serine.</text>
</comment>
<comment type="catalytic activity">
    <reaction evidence="1">
        <text>(1S,2R)-1-C-(indol-3-yl)glycerol 3-phosphate + L-serine = D-glyceraldehyde 3-phosphate + L-tryptophan + H2O</text>
        <dbReference type="Rhea" id="RHEA:10532"/>
        <dbReference type="ChEBI" id="CHEBI:15377"/>
        <dbReference type="ChEBI" id="CHEBI:33384"/>
        <dbReference type="ChEBI" id="CHEBI:57912"/>
        <dbReference type="ChEBI" id="CHEBI:58866"/>
        <dbReference type="ChEBI" id="CHEBI:59776"/>
        <dbReference type="EC" id="4.2.1.20"/>
    </reaction>
</comment>
<comment type="cofactor">
    <cofactor evidence="1">
        <name>pyridoxal 5'-phosphate</name>
        <dbReference type="ChEBI" id="CHEBI:597326"/>
    </cofactor>
</comment>
<comment type="pathway">
    <text evidence="1">Amino-acid biosynthesis; L-tryptophan biosynthesis; L-tryptophan from chorismate: step 5/5.</text>
</comment>
<comment type="subunit">
    <text evidence="1">Tetramer of two alpha and two beta chains.</text>
</comment>
<comment type="similarity">
    <text evidence="1">Belongs to the TrpB family.</text>
</comment>
<sequence>MNKQIQTEADELGFFGEYGGQYVPETLMPAIIELKKAYKEAKADPEFQRELEYYLSEYVGRATPLTYAASYTESLGGAKIYLKREDLNHTGAHKINNALGQALLAKRMGKKKLVAETGAGQHGVASATVAALFDMELVVFMGSEDIKRQQLNVFRMELLGAKVVAVEEGQGTLSDAVNKALQYWVSHVDDTHYLLGSALGPDPFPTIVRDFQSVIGKEIKSQILKKEGRLPDAIVACIGGGSNAIGTFYPFIKDDVALYGVEAAGQGEDTDKHALAIGKGSPGVLHGTKMYLIQDEGGQVQLAHSISAGLDYPGIGPEHSYYHDIGRVTFENASDTQAMNALINFTKHEGIIPAIESAHALSYVERLAPTMSKEDIIVVTISGRGDKDMETIRQYMAERGLAND</sequence>
<organism>
    <name type="scientific">Staphylococcus aureus (strain N315)</name>
    <dbReference type="NCBI Taxonomy" id="158879"/>
    <lineage>
        <taxon>Bacteria</taxon>
        <taxon>Bacillati</taxon>
        <taxon>Bacillota</taxon>
        <taxon>Bacilli</taxon>
        <taxon>Bacillales</taxon>
        <taxon>Staphylococcaceae</taxon>
        <taxon>Staphylococcus</taxon>
    </lineage>
</organism>
<reference key="1">
    <citation type="journal article" date="2001" name="Lancet">
        <title>Whole genome sequencing of meticillin-resistant Staphylococcus aureus.</title>
        <authorList>
            <person name="Kuroda M."/>
            <person name="Ohta T."/>
            <person name="Uchiyama I."/>
            <person name="Baba T."/>
            <person name="Yuzawa H."/>
            <person name="Kobayashi I."/>
            <person name="Cui L."/>
            <person name="Oguchi A."/>
            <person name="Aoki K."/>
            <person name="Nagai Y."/>
            <person name="Lian J.-Q."/>
            <person name="Ito T."/>
            <person name="Kanamori M."/>
            <person name="Matsumaru H."/>
            <person name="Maruyama A."/>
            <person name="Murakami H."/>
            <person name="Hosoyama A."/>
            <person name="Mizutani-Ui Y."/>
            <person name="Takahashi N.K."/>
            <person name="Sawano T."/>
            <person name="Inoue R."/>
            <person name="Kaito C."/>
            <person name="Sekimizu K."/>
            <person name="Hirakawa H."/>
            <person name="Kuhara S."/>
            <person name="Goto S."/>
            <person name="Yabuzaki J."/>
            <person name="Kanehisa M."/>
            <person name="Yamashita A."/>
            <person name="Oshima K."/>
            <person name="Furuya K."/>
            <person name="Yoshino C."/>
            <person name="Shiba T."/>
            <person name="Hattori M."/>
            <person name="Ogasawara N."/>
            <person name="Hayashi H."/>
            <person name="Hiramatsu K."/>
        </authorList>
    </citation>
    <scope>NUCLEOTIDE SEQUENCE [LARGE SCALE GENOMIC DNA]</scope>
    <source>
        <strain>N315</strain>
    </source>
</reference>
<evidence type="ECO:0000255" key="1">
    <source>
        <dbReference type="HAMAP-Rule" id="MF_00133"/>
    </source>
</evidence>
<feature type="chain" id="PRO_0000098999" description="Tryptophan synthase beta chain">
    <location>
        <begin position="1"/>
        <end position="404"/>
    </location>
</feature>
<feature type="modified residue" description="N6-(pyridoxal phosphate)lysine" evidence="1">
    <location>
        <position position="94"/>
    </location>
</feature>
<dbReference type="EC" id="4.2.1.20" evidence="1"/>
<dbReference type="EMBL" id="BA000018">
    <property type="protein sequence ID" value="BAB42464.1"/>
    <property type="molecule type" value="Genomic_DNA"/>
</dbReference>
<dbReference type="PIR" id="D89913">
    <property type="entry name" value="D89913"/>
</dbReference>
<dbReference type="RefSeq" id="WP_001041351.1">
    <property type="nucleotide sequence ID" value="NC_002745.2"/>
</dbReference>
<dbReference type="SMR" id="P66987"/>
<dbReference type="EnsemblBacteria" id="BAB42464">
    <property type="protein sequence ID" value="BAB42464"/>
    <property type="gene ID" value="BAB42464"/>
</dbReference>
<dbReference type="KEGG" id="sau:SA1204"/>
<dbReference type="HOGENOM" id="CLU_016734_3_1_9"/>
<dbReference type="UniPathway" id="UPA00035">
    <property type="reaction ID" value="UER00044"/>
</dbReference>
<dbReference type="GO" id="GO:0005737">
    <property type="term" value="C:cytoplasm"/>
    <property type="evidence" value="ECO:0007669"/>
    <property type="project" value="TreeGrafter"/>
</dbReference>
<dbReference type="GO" id="GO:0004834">
    <property type="term" value="F:tryptophan synthase activity"/>
    <property type="evidence" value="ECO:0007669"/>
    <property type="project" value="UniProtKB-UniRule"/>
</dbReference>
<dbReference type="CDD" id="cd06446">
    <property type="entry name" value="Trp-synth_B"/>
    <property type="match status" value="1"/>
</dbReference>
<dbReference type="FunFam" id="3.40.50.1100:FF:000001">
    <property type="entry name" value="Tryptophan synthase beta chain"/>
    <property type="match status" value="1"/>
</dbReference>
<dbReference type="FunFam" id="3.40.50.1100:FF:000004">
    <property type="entry name" value="Tryptophan synthase beta chain"/>
    <property type="match status" value="1"/>
</dbReference>
<dbReference type="Gene3D" id="3.40.50.1100">
    <property type="match status" value="2"/>
</dbReference>
<dbReference type="HAMAP" id="MF_00133">
    <property type="entry name" value="Trp_synth_beta"/>
    <property type="match status" value="1"/>
</dbReference>
<dbReference type="InterPro" id="IPR006653">
    <property type="entry name" value="Trp_synth_b_CS"/>
</dbReference>
<dbReference type="InterPro" id="IPR006654">
    <property type="entry name" value="Trp_synth_beta"/>
</dbReference>
<dbReference type="InterPro" id="IPR023026">
    <property type="entry name" value="Trp_synth_beta/beta-like"/>
</dbReference>
<dbReference type="InterPro" id="IPR001926">
    <property type="entry name" value="TrpB-like_PALP"/>
</dbReference>
<dbReference type="InterPro" id="IPR036052">
    <property type="entry name" value="TrpB-like_PALP_sf"/>
</dbReference>
<dbReference type="NCBIfam" id="TIGR00263">
    <property type="entry name" value="trpB"/>
    <property type="match status" value="1"/>
</dbReference>
<dbReference type="PANTHER" id="PTHR48077:SF3">
    <property type="entry name" value="TRYPTOPHAN SYNTHASE"/>
    <property type="match status" value="1"/>
</dbReference>
<dbReference type="PANTHER" id="PTHR48077">
    <property type="entry name" value="TRYPTOPHAN SYNTHASE-RELATED"/>
    <property type="match status" value="1"/>
</dbReference>
<dbReference type="Pfam" id="PF00291">
    <property type="entry name" value="PALP"/>
    <property type="match status" value="1"/>
</dbReference>
<dbReference type="PIRSF" id="PIRSF001413">
    <property type="entry name" value="Trp_syn_beta"/>
    <property type="match status" value="1"/>
</dbReference>
<dbReference type="SUPFAM" id="SSF53686">
    <property type="entry name" value="Tryptophan synthase beta subunit-like PLP-dependent enzymes"/>
    <property type="match status" value="1"/>
</dbReference>
<dbReference type="PROSITE" id="PS00168">
    <property type="entry name" value="TRP_SYNTHASE_BETA"/>
    <property type="match status" value="1"/>
</dbReference>
<proteinExistence type="inferred from homology"/>
<gene>
    <name evidence="1" type="primary">trpB</name>
    <name type="ordered locus">SA1204</name>
</gene>
<accession>P66987</accession>
<accession>Q99UA9</accession>
<name>TRPB_STAAN</name>
<keyword id="KW-0028">Amino-acid biosynthesis</keyword>
<keyword id="KW-0057">Aromatic amino acid biosynthesis</keyword>
<keyword id="KW-0456">Lyase</keyword>
<keyword id="KW-0663">Pyridoxal phosphate</keyword>
<keyword id="KW-0822">Tryptophan biosynthesis</keyword>
<protein>
    <recommendedName>
        <fullName evidence="1">Tryptophan synthase beta chain</fullName>
        <ecNumber evidence="1">4.2.1.20</ecNumber>
    </recommendedName>
</protein>